<feature type="chain" id="PRO_0000123424" description="Myosin-11">
    <location>
        <begin position="1"/>
        <end position="1972"/>
    </location>
</feature>
<feature type="domain" description="Myosin N-terminal SH3-like" evidence="8">
    <location>
        <begin position="31"/>
        <end position="81"/>
    </location>
</feature>
<feature type="domain" description="Myosin motor" evidence="7">
    <location>
        <begin position="85"/>
        <end position="783"/>
    </location>
</feature>
<feature type="domain" description="IQ" evidence="6">
    <location>
        <begin position="786"/>
        <end position="815"/>
    </location>
</feature>
<feature type="region of interest" description="Actin-binding" evidence="1">
    <location>
        <begin position="661"/>
        <end position="683"/>
    </location>
</feature>
<feature type="region of interest" description="Actin-binding" evidence="1">
    <location>
        <begin position="762"/>
        <end position="776"/>
    </location>
</feature>
<feature type="region of interest" description="Disordered" evidence="9">
    <location>
        <begin position="858"/>
        <end position="882"/>
    </location>
</feature>
<feature type="region of interest" description="Disordered" evidence="9">
    <location>
        <begin position="1744"/>
        <end position="1800"/>
    </location>
</feature>
<feature type="region of interest" description="Disordered" evidence="9">
    <location>
        <begin position="1866"/>
        <end position="1972"/>
    </location>
</feature>
<feature type="region of interest" description="C-terminal">
    <location>
        <begin position="1935"/>
        <end position="1972"/>
    </location>
</feature>
<feature type="coiled-coil region" evidence="5">
    <location>
        <begin position="844"/>
        <end position="1934"/>
    </location>
</feature>
<feature type="compositionally biased region" description="Polar residues" evidence="9">
    <location>
        <begin position="1762"/>
        <end position="1788"/>
    </location>
</feature>
<feature type="compositionally biased region" description="Basic and acidic residues" evidence="9">
    <location>
        <begin position="1789"/>
        <end position="1800"/>
    </location>
</feature>
<feature type="compositionally biased region" description="Basic and acidic residues" evidence="9">
    <location>
        <begin position="1866"/>
        <end position="1876"/>
    </location>
</feature>
<feature type="binding site" evidence="5">
    <location>
        <begin position="178"/>
        <end position="185"/>
    </location>
    <ligand>
        <name>ATP</name>
        <dbReference type="ChEBI" id="CHEBI:30616"/>
    </ligand>
</feature>
<feature type="modified residue" description="Phosphoserine" evidence="23">
    <location>
        <position position="8"/>
    </location>
</feature>
<feature type="modified residue" description="Phosphoserine" evidence="23">
    <location>
        <position position="23"/>
    </location>
</feature>
<feature type="modified residue" description="Phosphoserine" evidence="4">
    <location>
        <position position="40"/>
    </location>
</feature>
<feature type="modified residue" description="N6,N6,N6-trimethyllysine" evidence="5">
    <location>
        <position position="129"/>
    </location>
</feature>
<feature type="modified residue" description="Phosphothreonine" evidence="4">
    <location>
        <position position="1177"/>
    </location>
</feature>
<feature type="modified residue" description="Phosphoserine" evidence="3">
    <location>
        <position position="1684"/>
    </location>
</feature>
<feature type="modified residue" description="Phosphoserine" evidence="3">
    <location>
        <position position="1722"/>
    </location>
</feature>
<feature type="modified residue" description="Phosphoserine" evidence="22 23">
    <location>
        <position position="1954"/>
    </location>
</feature>
<feature type="modified residue" description="Phosphothreonine" evidence="23">
    <location>
        <position position="1958"/>
    </location>
</feature>
<feature type="modified residue" description="Phosphoserine" evidence="2">
    <location>
        <position position="1971"/>
    </location>
</feature>
<feature type="splice variant" id="VSP_043017" description="In isoform 2 and isoform 3." evidence="19 20">
    <original>T</original>
    <variation>TQGPSFAY</variation>
    <location>
        <position position="211"/>
    </location>
</feature>
<feature type="splice variant" id="VSP_043018" description="In isoform 3 and isoform 4." evidence="19 20">
    <original>RGNETSFVPSRRSGGRRVIENADGSEEETDTRDADFNGTKASE</original>
    <variation>GPPPQETSQ</variation>
    <location>
        <begin position="1930"/>
        <end position="1972"/>
    </location>
</feature>
<feature type="sequence variant" id="VAR_085875" evidence="15">
    <original>A</original>
    <variation>G</variation>
    <location>
        <position position="616"/>
    </location>
</feature>
<feature type="sequence variant" id="VAR_085645" description="In MMIHS2." evidence="17">
    <original>R</original>
    <variation>H</variation>
    <location>
        <position position="677"/>
    </location>
</feature>
<feature type="sequence variant" id="VAR_050205" description="In dbSNP:rs34263860.">
    <original>A</original>
    <variation>T</variation>
    <location>
        <position position="1104"/>
    </location>
</feature>
<feature type="sequence variant" id="VAR_085646" description="In MMIHS2." evidence="13">
    <location>
        <begin position="1200"/>
        <end position="1972"/>
    </location>
</feature>
<feature type="sequence variant" id="VAR_030239" description="In dbSNP:rs16967494.">
    <original>A</original>
    <variation>T</variation>
    <location>
        <position position="1234"/>
    </location>
</feature>
<feature type="sequence variant" id="VAR_031734" description="In AAT4." evidence="11">
    <location>
        <begin position="1241"/>
        <end position="1264"/>
    </location>
</feature>
<feature type="sequence variant" id="VAR_030240" description="In dbSNP:rs16967510.">
    <original>V</original>
    <variation>A</variation>
    <location>
        <position position="1289"/>
    </location>
</feature>
<feature type="sequence variant" id="VAR_030241" description="In dbSNP:rs7196804.">
    <original>V</original>
    <variation>M</variation>
    <location>
        <position position="1310"/>
    </location>
</feature>
<feature type="sequence variant" id="VAR_050206" description="In dbSNP:rs35176378.">
    <original>M</original>
    <variation>V</variation>
    <location>
        <position position="1508"/>
    </location>
</feature>
<feature type="sequence variant" id="VAR_085647" description="In VSCM2; uncertain significance." evidence="18">
    <original>L</original>
    <variation>V</variation>
    <location>
        <position position="1555"/>
    </location>
</feature>
<feature type="sequence variant" id="VAR_031735" description="In AAT4; dbSNP:rs142546324." evidence="11">
    <original>R</original>
    <variation>Q</variation>
    <location>
        <position position="1758"/>
    </location>
</feature>
<feature type="sequence conflict" description="In Ref. 9; D10667." evidence="21" ref="9">
    <original>EEK</original>
    <variation>NSE</variation>
    <location>
        <begin position="887"/>
        <end position="889"/>
    </location>
</feature>
<feature type="sequence conflict" description="In Ref. 9; D10667." evidence="21" ref="9">
    <original>T</original>
    <variation>S</variation>
    <location>
        <position position="1558"/>
    </location>
</feature>
<feature type="sequence conflict" description="In Ref. 9; D10667." evidence="21" ref="9">
    <original>KQ</original>
    <variation>NE</variation>
    <location>
        <begin position="1610"/>
        <end position="1611"/>
    </location>
</feature>
<feature type="sequence conflict" description="In Ref. 10; CAA49154." evidence="21" ref="10">
    <original>A</original>
    <variation>S</variation>
    <location>
        <position position="1786"/>
    </location>
</feature>
<feature type="sequence conflict" description="In Ref. 9; D10667." evidence="21" ref="9">
    <original>T</original>
    <variation>L</variation>
    <location>
        <position position="1958"/>
    </location>
</feature>
<keyword id="KW-0009">Actin-binding</keyword>
<keyword id="KW-0025">Alternative splicing</keyword>
<keyword id="KW-0993">Aortic aneurysm</keyword>
<keyword id="KW-0067">ATP-binding</keyword>
<keyword id="KW-0112">Calmodulin-binding</keyword>
<keyword id="KW-0160">Chromosomal rearrangement</keyword>
<keyword id="KW-0175">Coiled coil</keyword>
<keyword id="KW-0225">Disease variant</keyword>
<keyword id="KW-0488">Methylation</keyword>
<keyword id="KW-0505">Motor protein</keyword>
<keyword id="KW-0514">Muscle protein</keyword>
<keyword id="KW-0518">Myosin</keyword>
<keyword id="KW-0547">Nucleotide-binding</keyword>
<keyword id="KW-0597">Phosphoprotein</keyword>
<keyword id="KW-1267">Proteomics identification</keyword>
<keyword id="KW-0656">Proto-oncogene</keyword>
<keyword id="KW-1185">Reference proteome</keyword>
<keyword id="KW-0787">Thick filament</keyword>
<gene>
    <name type="primary">MYH11</name>
    <name type="synonym">KIAA0866</name>
</gene>
<dbReference type="EMBL" id="AY520816">
    <property type="protein sequence ID" value="AAS98910.1"/>
    <property type="molecule type" value="mRNA"/>
</dbReference>
<dbReference type="EMBL" id="AY520817">
    <property type="protein sequence ID" value="AAS98911.1"/>
    <property type="molecule type" value="mRNA"/>
</dbReference>
<dbReference type="EMBL" id="AF001548">
    <property type="protein sequence ID" value="AAC31665.1"/>
    <property type="molecule type" value="Genomic_DNA"/>
</dbReference>
<dbReference type="EMBL" id="U91323">
    <property type="protein sequence ID" value="AAC35212.1"/>
    <property type="molecule type" value="Genomic_DNA"/>
</dbReference>
<dbReference type="EMBL" id="AB020673">
    <property type="protein sequence ID" value="BAA74889.2"/>
    <property type="status" value="ALT_INIT"/>
    <property type="molecule type" value="mRNA"/>
</dbReference>
<dbReference type="EMBL" id="GU143399">
    <property type="protein sequence ID" value="ACZ58373.1"/>
    <property type="molecule type" value="Genomic_DNA"/>
</dbReference>
<dbReference type="EMBL" id="GU143400">
    <property type="protein sequence ID" value="ACZ58374.1"/>
    <property type="molecule type" value="Genomic_DNA"/>
</dbReference>
<dbReference type="EMBL" id="AC024120">
    <property type="status" value="NOT_ANNOTATED_CDS"/>
    <property type="molecule type" value="Genomic_DNA"/>
</dbReference>
<dbReference type="EMBL" id="AC026401">
    <property type="status" value="NOT_ANNOTATED_CDS"/>
    <property type="molecule type" value="Genomic_DNA"/>
</dbReference>
<dbReference type="EMBL" id="AC130651">
    <property type="status" value="NOT_ANNOTATED_CDS"/>
    <property type="molecule type" value="Genomic_DNA"/>
</dbReference>
<dbReference type="EMBL" id="CH471226">
    <property type="protein sequence ID" value="EAW53924.1"/>
    <property type="molecule type" value="Genomic_DNA"/>
</dbReference>
<dbReference type="EMBL" id="CH471226">
    <property type="protein sequence ID" value="EAW53926.1"/>
    <property type="molecule type" value="Genomic_DNA"/>
</dbReference>
<dbReference type="EMBL" id="BC101677">
    <property type="protein sequence ID" value="AAI01678.1"/>
    <property type="molecule type" value="mRNA"/>
</dbReference>
<dbReference type="EMBL" id="BC104906">
    <property type="protein sequence ID" value="AAI04907.1"/>
    <property type="molecule type" value="mRNA"/>
</dbReference>
<dbReference type="EMBL" id="BC143364">
    <property type="protein sequence ID" value="AAI43365.1"/>
    <property type="molecule type" value="mRNA"/>
</dbReference>
<dbReference type="EMBL" id="D10667">
    <property type="status" value="NOT_ANNOTATED_CDS"/>
    <property type="molecule type" value="mRNA"/>
</dbReference>
<dbReference type="EMBL" id="X69292">
    <property type="protein sequence ID" value="CAA49154.1"/>
    <property type="molecule type" value="mRNA"/>
</dbReference>
<dbReference type="CCDS" id="CCDS10565.1">
    <molecule id="P35749-1"/>
</dbReference>
<dbReference type="CCDS" id="CCDS10566.1">
    <molecule id="P35749-4"/>
</dbReference>
<dbReference type="CCDS" id="CCDS45423.1">
    <molecule id="P35749-2"/>
</dbReference>
<dbReference type="CCDS" id="CCDS45424.1">
    <molecule id="P35749-3"/>
</dbReference>
<dbReference type="RefSeq" id="NP_001035202.1">
    <molecule id="P35749-3"/>
    <property type="nucleotide sequence ID" value="NM_001040113.2"/>
</dbReference>
<dbReference type="RefSeq" id="NP_001035203.1">
    <molecule id="P35749-2"/>
    <property type="nucleotide sequence ID" value="NM_001040114.2"/>
</dbReference>
<dbReference type="RefSeq" id="NP_002465.1">
    <molecule id="P35749-1"/>
    <property type="nucleotide sequence ID" value="NM_002474.3"/>
</dbReference>
<dbReference type="RefSeq" id="NP_074035.1">
    <molecule id="P35749-4"/>
    <property type="nucleotide sequence ID" value="NM_022844.3"/>
</dbReference>
<dbReference type="RefSeq" id="XP_016878739.1">
    <property type="nucleotide sequence ID" value="XM_017023250.1"/>
</dbReference>
<dbReference type="RefSeq" id="XP_054185070.1">
    <molecule id="P35749-3"/>
    <property type="nucleotide sequence ID" value="XM_054329095.1"/>
</dbReference>
<dbReference type="SMR" id="P35749"/>
<dbReference type="BioGRID" id="110714">
    <property type="interactions" value="138"/>
</dbReference>
<dbReference type="DIP" id="DIP-47268N"/>
<dbReference type="FunCoup" id="P35749">
    <property type="interactions" value="365"/>
</dbReference>
<dbReference type="IntAct" id="P35749">
    <property type="interactions" value="61"/>
</dbReference>
<dbReference type="MINT" id="P35749"/>
<dbReference type="STRING" id="9606.ENSP00000379616"/>
<dbReference type="DrugBank" id="DB04444">
    <property type="generic name" value="Tetrafluoroaluminate Ion"/>
</dbReference>
<dbReference type="GlyCosmos" id="P35749">
    <property type="glycosylation" value="1 site, 2 glycans"/>
</dbReference>
<dbReference type="GlyGen" id="P35749">
    <property type="glycosylation" value="1 site, 2 O-linked glycans (1 site)"/>
</dbReference>
<dbReference type="iPTMnet" id="P35749"/>
<dbReference type="MetOSite" id="P35749"/>
<dbReference type="PhosphoSitePlus" id="P35749"/>
<dbReference type="SwissPalm" id="P35749"/>
<dbReference type="BioMuta" id="MYH11"/>
<dbReference type="DMDM" id="13432177"/>
<dbReference type="jPOST" id="P35749"/>
<dbReference type="MassIVE" id="P35749"/>
<dbReference type="PaxDb" id="9606-ENSP00000379616"/>
<dbReference type="PeptideAtlas" id="P35749"/>
<dbReference type="PRIDE" id="P35749"/>
<dbReference type="ProteomicsDB" id="55147">
    <molecule id="P35749-1"/>
</dbReference>
<dbReference type="ProteomicsDB" id="55148">
    <molecule id="P35749-2"/>
</dbReference>
<dbReference type="ProteomicsDB" id="55149">
    <molecule id="P35749-3"/>
</dbReference>
<dbReference type="ProteomicsDB" id="61796"/>
<dbReference type="Pumba" id="P35749"/>
<dbReference type="Antibodypedia" id="1966">
    <property type="antibodies" value="806 antibodies from 33 providers"/>
</dbReference>
<dbReference type="DNASU" id="4629"/>
<dbReference type="Ensembl" id="ENST00000300036.6">
    <molecule id="P35749-1"/>
    <property type="protein sequence ID" value="ENSP00000300036.5"/>
    <property type="gene ID" value="ENSG00000133392.19"/>
</dbReference>
<dbReference type="Ensembl" id="ENST00000396324.7">
    <molecule id="P35749-2"/>
    <property type="protein sequence ID" value="ENSP00000379616.3"/>
    <property type="gene ID" value="ENSG00000133392.19"/>
</dbReference>
<dbReference type="Ensembl" id="ENST00000452625.7">
    <molecule id="P35749-3"/>
    <property type="protein sequence ID" value="ENSP00000407821.2"/>
    <property type="gene ID" value="ENSG00000133392.19"/>
</dbReference>
<dbReference type="Ensembl" id="ENST00000576790.7">
    <molecule id="P35749-4"/>
    <property type="protein sequence ID" value="ENSP00000458731.1"/>
    <property type="gene ID" value="ENSG00000133392.19"/>
</dbReference>
<dbReference type="Ensembl" id="ENST00000612165.4">
    <molecule id="P35749-3"/>
    <property type="protein sequence ID" value="ENSP00000478092.1"/>
    <property type="gene ID" value="ENSG00000276480.5"/>
</dbReference>
<dbReference type="Ensembl" id="ENST00000616422.4">
    <molecule id="P35749-4"/>
    <property type="protein sequence ID" value="ENSP00000478816.1"/>
    <property type="gene ID" value="ENSG00000276480.5"/>
</dbReference>
<dbReference type="Ensembl" id="ENST00000621545.2">
    <molecule id="P35749-2"/>
    <property type="protein sequence ID" value="ENSP00000478109.1"/>
    <property type="gene ID" value="ENSG00000276480.5"/>
</dbReference>
<dbReference type="Ensembl" id="ENST00000634050.1">
    <molecule id="P35749-1"/>
    <property type="protein sequence ID" value="ENSP00000488461.1"/>
    <property type="gene ID" value="ENSG00000276480.5"/>
</dbReference>
<dbReference type="Ensembl" id="ENST00000713757.1">
    <molecule id="P35749-1"/>
    <property type="protein sequence ID" value="ENSP00000519058.1"/>
    <property type="gene ID" value="ENSG00000133392.19"/>
</dbReference>
<dbReference type="GeneID" id="4629"/>
<dbReference type="KEGG" id="hsa:4629"/>
<dbReference type="MANE-Select" id="ENST00000300036.6">
    <property type="protein sequence ID" value="ENSP00000300036.5"/>
    <property type="RefSeq nucleotide sequence ID" value="NM_002474.3"/>
    <property type="RefSeq protein sequence ID" value="NP_002465.1"/>
</dbReference>
<dbReference type="UCSC" id="uc002ddv.4">
    <molecule id="P35749-1"/>
    <property type="organism name" value="human"/>
</dbReference>
<dbReference type="AGR" id="HGNC:7569"/>
<dbReference type="CTD" id="4629"/>
<dbReference type="DisGeNET" id="4629"/>
<dbReference type="GeneCards" id="MYH11"/>
<dbReference type="GeneReviews" id="MYH11"/>
<dbReference type="HGNC" id="HGNC:7569">
    <property type="gene designation" value="MYH11"/>
</dbReference>
<dbReference type="HPA" id="ENSG00000133392">
    <property type="expression patterns" value="Tissue enhanced (intestine, seminal vesicle, urinary bladder)"/>
</dbReference>
<dbReference type="MalaCards" id="MYH11"/>
<dbReference type="MIM" id="132900">
    <property type="type" value="phenotype"/>
</dbReference>
<dbReference type="MIM" id="160745">
    <property type="type" value="gene"/>
</dbReference>
<dbReference type="MIM" id="619350">
    <property type="type" value="phenotype"/>
</dbReference>
<dbReference type="MIM" id="619351">
    <property type="type" value="phenotype"/>
</dbReference>
<dbReference type="neXtProt" id="NX_P35749"/>
<dbReference type="OpenTargets" id="ENSG00000133392"/>
<dbReference type="Orphanet" id="98829">
    <property type="disease" value="Acute myeloid leukemia with abnormal bone marrow eosinophils inv(16)(p13q22) or t(16;16)(p13;q22)"/>
</dbReference>
<dbReference type="Orphanet" id="229">
    <property type="disease" value="Familial aortic dissection"/>
</dbReference>
<dbReference type="Orphanet" id="91387">
    <property type="disease" value="Familial thoracic aortic aneurysm and aortic dissection"/>
</dbReference>
<dbReference type="Orphanet" id="2241">
    <property type="disease" value="Megacystis-microcolon-intestinal hypoperistalsis syndrome"/>
</dbReference>
<dbReference type="PharmGKB" id="PA31367"/>
<dbReference type="VEuPathDB" id="HostDB:ENSG00000133392"/>
<dbReference type="eggNOG" id="KOG0161">
    <property type="taxonomic scope" value="Eukaryota"/>
</dbReference>
<dbReference type="GeneTree" id="ENSGT00940000155421"/>
<dbReference type="HOGENOM" id="CLU_000192_4_2_1"/>
<dbReference type="InParanoid" id="P35749"/>
<dbReference type="OMA" id="QARITNM"/>
<dbReference type="OrthoDB" id="10254995at2759"/>
<dbReference type="PAN-GO" id="P35749">
    <property type="GO annotations" value="6 GO annotations based on evolutionary models"/>
</dbReference>
<dbReference type="PhylomeDB" id="P35749"/>
<dbReference type="TreeFam" id="TF333601"/>
<dbReference type="PathwayCommons" id="P35749"/>
<dbReference type="Reactome" id="R-HSA-3928663">
    <property type="pathway name" value="EPHA-mediated growth cone collapse"/>
</dbReference>
<dbReference type="Reactome" id="R-HSA-416572">
    <property type="pathway name" value="Sema4D induced cell migration and growth-cone collapse"/>
</dbReference>
<dbReference type="Reactome" id="R-HSA-445355">
    <property type="pathway name" value="Smooth Muscle Contraction"/>
</dbReference>
<dbReference type="Reactome" id="R-HSA-5625740">
    <property type="pathway name" value="RHO GTPases activate PKNs"/>
</dbReference>
<dbReference type="Reactome" id="R-HSA-5625900">
    <property type="pathway name" value="RHO GTPases activate CIT"/>
</dbReference>
<dbReference type="Reactome" id="R-HSA-5627117">
    <property type="pathway name" value="RHO GTPases Activate ROCKs"/>
</dbReference>
<dbReference type="Reactome" id="R-HSA-5627123">
    <property type="pathway name" value="RHO GTPases activate PAKs"/>
</dbReference>
<dbReference type="SignaLink" id="P35749"/>
<dbReference type="BioGRID-ORCS" id="4629">
    <property type="hits" value="10 hits in 1155 CRISPR screens"/>
</dbReference>
<dbReference type="CD-CODE" id="FB4E32DD">
    <property type="entry name" value="Presynaptic clusters and postsynaptic densities"/>
</dbReference>
<dbReference type="ChiTaRS" id="MYH11">
    <property type="organism name" value="human"/>
</dbReference>
<dbReference type="GeneWiki" id="MYH11"/>
<dbReference type="GenomeRNAi" id="4629"/>
<dbReference type="Pharos" id="P35749">
    <property type="development level" value="Tbio"/>
</dbReference>
<dbReference type="PRO" id="PR:P35749"/>
<dbReference type="Proteomes" id="UP000005640">
    <property type="component" value="Chromosome 16"/>
</dbReference>
<dbReference type="RNAct" id="P35749">
    <property type="molecule type" value="protein"/>
</dbReference>
<dbReference type="Bgee" id="ENSG00000133392">
    <property type="expression patterns" value="Expressed in lower esophagus muscularis layer and 103 other cell types or tissues"/>
</dbReference>
<dbReference type="ExpressionAtlas" id="P35749">
    <property type="expression patterns" value="baseline and differential"/>
</dbReference>
<dbReference type="GO" id="GO:0005737">
    <property type="term" value="C:cytoplasm"/>
    <property type="evidence" value="ECO:0000318"/>
    <property type="project" value="GO_Central"/>
</dbReference>
<dbReference type="GO" id="GO:0005829">
    <property type="term" value="C:cytosol"/>
    <property type="evidence" value="ECO:0000304"/>
    <property type="project" value="Reactome"/>
</dbReference>
<dbReference type="GO" id="GO:0070062">
    <property type="term" value="C:extracellular exosome"/>
    <property type="evidence" value="ECO:0007005"/>
    <property type="project" value="UniProtKB"/>
</dbReference>
<dbReference type="GO" id="GO:0042470">
    <property type="term" value="C:melanosome"/>
    <property type="evidence" value="ECO:0007669"/>
    <property type="project" value="UniProtKB-SubCell"/>
</dbReference>
<dbReference type="GO" id="GO:0005859">
    <property type="term" value="C:muscle myosin complex"/>
    <property type="evidence" value="ECO:0000304"/>
    <property type="project" value="ProtInc"/>
</dbReference>
<dbReference type="GO" id="GO:0032982">
    <property type="term" value="C:myosin filament"/>
    <property type="evidence" value="ECO:0000318"/>
    <property type="project" value="GO_Central"/>
</dbReference>
<dbReference type="GO" id="GO:0016460">
    <property type="term" value="C:myosin II complex"/>
    <property type="evidence" value="ECO:0000318"/>
    <property type="project" value="GO_Central"/>
</dbReference>
<dbReference type="GO" id="GO:0051015">
    <property type="term" value="F:actin filament binding"/>
    <property type="evidence" value="ECO:0000318"/>
    <property type="project" value="GO_Central"/>
</dbReference>
<dbReference type="GO" id="GO:0005524">
    <property type="term" value="F:ATP binding"/>
    <property type="evidence" value="ECO:0007669"/>
    <property type="project" value="UniProtKB-KW"/>
</dbReference>
<dbReference type="GO" id="GO:0005516">
    <property type="term" value="F:calmodulin binding"/>
    <property type="evidence" value="ECO:0007669"/>
    <property type="project" value="UniProtKB-KW"/>
</dbReference>
<dbReference type="GO" id="GO:0000146">
    <property type="term" value="F:microfilament motor activity"/>
    <property type="evidence" value="ECO:0000318"/>
    <property type="project" value="GO_Central"/>
</dbReference>
<dbReference type="GO" id="GO:0008307">
    <property type="term" value="F:structural constituent of muscle"/>
    <property type="evidence" value="ECO:0000315"/>
    <property type="project" value="UniProtKB"/>
</dbReference>
<dbReference type="GO" id="GO:0031032">
    <property type="term" value="P:actomyosin structure organization"/>
    <property type="evidence" value="ECO:0000318"/>
    <property type="project" value="GO_Central"/>
</dbReference>
<dbReference type="GO" id="GO:0055013">
    <property type="term" value="P:cardiac muscle cell development"/>
    <property type="evidence" value="ECO:0000315"/>
    <property type="project" value="UniProtKB"/>
</dbReference>
<dbReference type="GO" id="GO:0048251">
    <property type="term" value="P:elastic fiber assembly"/>
    <property type="evidence" value="ECO:0000315"/>
    <property type="project" value="UniProtKB"/>
</dbReference>
<dbReference type="GO" id="GO:0030241">
    <property type="term" value="P:skeletal muscle myosin thick filament assembly"/>
    <property type="evidence" value="ECO:0000250"/>
    <property type="project" value="UniProtKB"/>
</dbReference>
<dbReference type="GO" id="GO:0006939">
    <property type="term" value="P:smooth muscle contraction"/>
    <property type="evidence" value="ECO:0000250"/>
    <property type="project" value="UniProtKB"/>
</dbReference>
<dbReference type="CDD" id="cd14921">
    <property type="entry name" value="MYSc_Myh11"/>
    <property type="match status" value="1"/>
</dbReference>
<dbReference type="FunFam" id="2.30.30.360:FF:000001">
    <property type="entry name" value="Myosin heavy chain"/>
    <property type="match status" value="1"/>
</dbReference>
<dbReference type="FunFam" id="3.30.70.1590:FF:000001">
    <property type="entry name" value="Myosin heavy chain"/>
    <property type="match status" value="1"/>
</dbReference>
<dbReference type="FunFam" id="1.10.10.820:FF:000002">
    <property type="entry name" value="Myosin heavy chain 10"/>
    <property type="match status" value="1"/>
</dbReference>
<dbReference type="FunFam" id="1.20.120.720:FF:000002">
    <property type="entry name" value="Myosin heavy chain 10"/>
    <property type="match status" value="1"/>
</dbReference>
<dbReference type="FunFam" id="1.20.5.4820:FF:000002">
    <property type="entry name" value="Myosin heavy chain 10"/>
    <property type="match status" value="1"/>
</dbReference>
<dbReference type="FunFam" id="1.20.58.530:FF:000003">
    <property type="entry name" value="Myosin heavy chain 10"/>
    <property type="match status" value="1"/>
</dbReference>
<dbReference type="FunFam" id="1.20.5.340:FF:000008">
    <property type="entry name" value="Myosin heavy chain 11"/>
    <property type="match status" value="1"/>
</dbReference>
<dbReference type="FunFam" id="1.20.5.340:FF:000007">
    <property type="entry name" value="Myosin heavy chain, non-muscle"/>
    <property type="match status" value="1"/>
</dbReference>
<dbReference type="FunFam" id="4.10.270.10:FF:000001">
    <property type="entry name" value="Myosin heavy chain, non-muscle"/>
    <property type="match status" value="1"/>
</dbReference>
<dbReference type="FunFam" id="1.20.5.340:FF:000009">
    <property type="entry name" value="myosin-11 isoform X2"/>
    <property type="match status" value="1"/>
</dbReference>
<dbReference type="FunFam" id="1.20.5.340:FF:000027">
    <property type="entry name" value="myosin-11 isoform X2"/>
    <property type="match status" value="1"/>
</dbReference>
<dbReference type="FunFam" id="3.40.850.10:FF:000101">
    <property type="entry name" value="Slow myosin heavy chain 2"/>
    <property type="match status" value="1"/>
</dbReference>
<dbReference type="Gene3D" id="1.10.10.820">
    <property type="match status" value="1"/>
</dbReference>
<dbReference type="Gene3D" id="1.20.5.340">
    <property type="match status" value="4"/>
</dbReference>
<dbReference type="Gene3D" id="1.20.58.530">
    <property type="match status" value="1"/>
</dbReference>
<dbReference type="Gene3D" id="3.30.70.1590">
    <property type="match status" value="1"/>
</dbReference>
<dbReference type="Gene3D" id="6.10.250.2420">
    <property type="match status" value="1"/>
</dbReference>
<dbReference type="Gene3D" id="3.40.850.10">
    <property type="entry name" value="Kinesin motor domain"/>
    <property type="match status" value="1"/>
</dbReference>
<dbReference type="Gene3D" id="2.30.30.360">
    <property type="entry name" value="Myosin S1 fragment, N-terminal"/>
    <property type="match status" value="1"/>
</dbReference>
<dbReference type="Gene3D" id="1.20.120.720">
    <property type="entry name" value="Myosin VI head, motor domain, U50 subdomain"/>
    <property type="match status" value="1"/>
</dbReference>
<dbReference type="Gene3D" id="4.10.270.10">
    <property type="entry name" value="Myosin, subunit A"/>
    <property type="match status" value="1"/>
</dbReference>
<dbReference type="InterPro" id="IPR000048">
    <property type="entry name" value="IQ_motif_EF-hand-BS"/>
</dbReference>
<dbReference type="InterPro" id="IPR036961">
    <property type="entry name" value="Kinesin_motor_dom_sf"/>
</dbReference>
<dbReference type="InterPro" id="IPR001609">
    <property type="entry name" value="Myosin_head_motor_dom-like"/>
</dbReference>
<dbReference type="InterPro" id="IPR004009">
    <property type="entry name" value="Myosin_N"/>
</dbReference>
<dbReference type="InterPro" id="IPR008989">
    <property type="entry name" value="Myosin_S1_N"/>
</dbReference>
<dbReference type="InterPro" id="IPR002928">
    <property type="entry name" value="Myosin_tail"/>
</dbReference>
<dbReference type="InterPro" id="IPR027417">
    <property type="entry name" value="P-loop_NTPase"/>
</dbReference>
<dbReference type="PANTHER" id="PTHR45615">
    <property type="entry name" value="MYOSIN HEAVY CHAIN, NON-MUSCLE"/>
    <property type="match status" value="1"/>
</dbReference>
<dbReference type="PANTHER" id="PTHR45615:SF23">
    <property type="entry name" value="MYOSIN-11"/>
    <property type="match status" value="1"/>
</dbReference>
<dbReference type="Pfam" id="PF00063">
    <property type="entry name" value="Myosin_head"/>
    <property type="match status" value="1"/>
</dbReference>
<dbReference type="Pfam" id="PF02736">
    <property type="entry name" value="Myosin_N"/>
    <property type="match status" value="1"/>
</dbReference>
<dbReference type="Pfam" id="PF01576">
    <property type="entry name" value="Myosin_tail_1"/>
    <property type="match status" value="1"/>
</dbReference>
<dbReference type="PRINTS" id="PR00193">
    <property type="entry name" value="MYOSINHEAVY"/>
</dbReference>
<dbReference type="SMART" id="SM00015">
    <property type="entry name" value="IQ"/>
    <property type="match status" value="1"/>
</dbReference>
<dbReference type="SMART" id="SM00242">
    <property type="entry name" value="MYSc"/>
    <property type="match status" value="1"/>
</dbReference>
<dbReference type="SUPFAM" id="SSF90257">
    <property type="entry name" value="Myosin rod fragments"/>
    <property type="match status" value="6"/>
</dbReference>
<dbReference type="SUPFAM" id="SSF50084">
    <property type="entry name" value="Myosin S1 fragment, N-terminal domain"/>
    <property type="match status" value="1"/>
</dbReference>
<dbReference type="SUPFAM" id="SSF52540">
    <property type="entry name" value="P-loop containing nucleoside triphosphate hydrolases"/>
    <property type="match status" value="1"/>
</dbReference>
<dbReference type="PROSITE" id="PS50096">
    <property type="entry name" value="IQ"/>
    <property type="match status" value="1"/>
</dbReference>
<dbReference type="PROSITE" id="PS51456">
    <property type="entry name" value="MYOSIN_MOTOR"/>
    <property type="match status" value="1"/>
</dbReference>
<dbReference type="PROSITE" id="PS51844">
    <property type="entry name" value="SH3_LIKE"/>
    <property type="match status" value="1"/>
</dbReference>
<comment type="function">
    <text>Muscle contraction.</text>
</comment>
<comment type="subunit">
    <text>Muscle myosin is a hexameric protein that consists of 2 heavy chain subunits (MHC), 2 alkali light chain subunits (MLC) and 2 regulatory light chain subunits (MLC-2).</text>
</comment>
<comment type="interaction">
    <interactant intactId="EBI-1052928">
        <id>P35749</id>
    </interactant>
    <interactant intactId="EBI-1642165">
        <id>O14950</id>
        <label>MYL12B</label>
    </interactant>
    <organismsDiffer>false</organismsDiffer>
    <experiments>2</experiments>
</comment>
<comment type="subcellular location">
    <subcellularLocation>
        <location evidence="12">Melanosome</location>
    </subcellularLocation>
    <text>Identified by mass spectrometry in melanosome fractions from stage I to stage IV. Thick filaments of the myofibrils.</text>
</comment>
<comment type="alternative products">
    <event type="alternative splicing"/>
    <isoform>
        <id>P35749-1</id>
        <name>1</name>
        <name>SM-A</name>
        <sequence type="displayed"/>
    </isoform>
    <isoform>
        <id>P35749-2</id>
        <name>2</name>
        <name>SM-B1</name>
        <sequence type="described" ref="VSP_043017"/>
    </isoform>
    <isoform>
        <id>P35749-3</id>
        <name>3</name>
        <name>SM-B2</name>
        <sequence type="described" ref="VSP_043017 VSP_043018"/>
    </isoform>
    <isoform>
        <id>P35749-4</id>
        <name>4</name>
        <sequence type="described" ref="VSP_043018"/>
    </isoform>
</comment>
<comment type="tissue specificity">
    <text evidence="10">Smooth muscle; expressed in the umbilical artery, bladder, esophagus and trachea. Isoform 1 is mostly found in slowly contracting tonic muscles.</text>
</comment>
<comment type="domain">
    <text>The rodlike tail sequence is highly repetitive, showing cycles of a 28-residue repeat pattern composed of 4 heptapeptides, characteristic for alpha-helical coiled coils.</text>
</comment>
<comment type="domain">
    <text evidence="21">Limited proteolysis of myosin heavy chain produces 1 light meromyosin (LMM) and 1 heavy meromyosin (HMM). HMM can be further cleaved into 2 globular subfragments (S1) and 1 rod-shaped subfragment (S2).</text>
</comment>
<comment type="disease">
    <text>A chromosomal aberration involving MYH11 is found in acute myeloid leukemia of M4EO subtype. Pericentric inversion inv(16)(p13;q22). The inversion produces a fusion protein consisting of the 165 N-terminal residues of CBF-beta (PEPB2) and the tail region of MYH11.</text>
</comment>
<comment type="disease" evidence="11">
    <disease id="DI-00128">
        <name>Aortic aneurysm, familial thoracic 4</name>
        <acronym>AAT4</acronym>
        <description>A disease characterized by permanent dilation of the thoracic aorta usually due to degenerative changes in the aortic wall. It is primarily associated with a characteristic histologic appearance known as 'medial necrosis' or 'Erdheim cystic medial necrosis' in which there is degeneration and fragmentation of elastic fibers, loss of smooth muscle cells, and an accumulation of basophilic ground substance.</description>
        <dbReference type="MIM" id="132900"/>
    </disease>
    <text>The disease is caused by variants affecting the gene represented in this entry.</text>
</comment>
<comment type="disease" evidence="13 14 17">
    <disease id="DI-06120">
        <name>Megacystis-microcolon-intestinal hypoperistalsis syndrome 2</name>
        <acronym>MMIHS2</acronym>
        <description>A form of megacystis-microcolon-intestinal hypoperistalsis syndrome, a congenital visceral myopathy primarily affecting females, and characterized by loss of smooth muscle contraction in the bladder and intestine. Affected individuals present at birth with functional obstruction of intestine, microcolon, dilation of bladder, and secondary hydronephrosis. The majority of cases have a fatal outcome due to malnutrition and sepsis, followed by multiorgan failure. MMIHS2 inheritance is autosomal recessive.</description>
        <dbReference type="MIM" id="619351"/>
    </disease>
    <text>The disease is caused by variants affecting the gene represented in this entry.</text>
</comment>
<comment type="disease" evidence="16 18">
    <disease id="DI-06119">
        <name>Visceral myopathy 2</name>
        <acronym>VSCM2</acronym>
        <description>A form of visceral myopathy, a gastrointestinal pseudo-obstruction disorder characterized by impaired function of enteric smooth muscle cells, intestinal dysmotility and paresis, severe abdominal pain, and malnutrition. The disease shows inter- and intrafamilial variability. VSCM2 inheritance is autosomal dominant.</description>
        <dbReference type="MIM" id="619350"/>
    </disease>
    <text>The disease is caused by variants affecting the gene represented in this entry.</text>
</comment>
<comment type="miscellaneous">
    <molecule>Isoform 2</molecule>
    <text evidence="21">This isoform with a 7 AA insert in the head domain is predominantly expressed in rapidly contracting phasic muscles.</text>
</comment>
<comment type="miscellaneous">
    <molecule>Isoform 3</molecule>
    <text evidence="21">This isoform with a 7 AA insert in the head domain is predominantly expressed in rapidly contracting phasic muscles.</text>
</comment>
<comment type="similarity">
    <text evidence="21">Belongs to the TRAFAC class myosin-kinesin ATPase superfamily. Myosin family.</text>
</comment>
<comment type="sequence caution" evidence="21">
    <conflict type="erroneous initiation">
        <sequence resource="EMBL-CDS" id="BAA74889"/>
    </conflict>
</comment>
<comment type="online information" name="Atlas of Genetics and Cytogenetics in Oncology and Haematology">
    <link uri="https://atlasgeneticsoncology.org/gene/43/MYH11"/>
</comment>
<proteinExistence type="evidence at protein level"/>
<organism>
    <name type="scientific">Homo sapiens</name>
    <name type="common">Human</name>
    <dbReference type="NCBI Taxonomy" id="9606"/>
    <lineage>
        <taxon>Eukaryota</taxon>
        <taxon>Metazoa</taxon>
        <taxon>Chordata</taxon>
        <taxon>Craniata</taxon>
        <taxon>Vertebrata</taxon>
        <taxon>Euteleostomi</taxon>
        <taxon>Mammalia</taxon>
        <taxon>Eutheria</taxon>
        <taxon>Euarchontoglires</taxon>
        <taxon>Primates</taxon>
        <taxon>Haplorrhini</taxon>
        <taxon>Catarrhini</taxon>
        <taxon>Hominidae</taxon>
        <taxon>Homo</taxon>
    </lineage>
</organism>
<protein>
    <recommendedName>
        <fullName>Myosin-11</fullName>
    </recommendedName>
    <alternativeName>
        <fullName>Myosin heavy chain 11</fullName>
    </alternativeName>
    <alternativeName>
        <fullName>Myosin heavy chain, smooth muscle isoform</fullName>
    </alternativeName>
    <alternativeName>
        <fullName>SMMHC</fullName>
    </alternativeName>
</protein>
<sequence>MAQKGQLSDDEKFLFVDKNFINSPVAQADWAAKRLVWVPSEKQGFEAASIKEEKGDEVVVELVENGKKVTVGKDDIQKMNPPKFSKVEDMAELTCLNEASVLHNLRERYFSGLIYTYSGLFCVVVNPYKHLPIYSEKIVDMYKGKKRHEMPPHIYAIADTAYRSMLQDREDQSILCTGESGAGKTENTKKVIQYLAVVASSHKGKKDTSITGELEKQLLQANPILEAFGNAKTVKNDNSSRFGKFIRINFDVTGYIVGANIETYLLEKSRAIRQARDERTFHIFYYMIAGAKEKMRSDLLLEGFNNYTFLSNGFVPIPAAQDDEMFQETVEAMAIMGFSEEEQLSILKVVSSVLQLGNIVFKKERNTDQASMPDNTAAQKVCHLMGINVTDFTRSILTPRIKVGRDVVQKAQTKEQADFAVEALAKATYERLFRWILTRVNKALDKTHRQGASFLGILDIAGFEIFEVNSFEQLCINYTNEKLQQLFNHTMFILEQEEYQREGIEWNFIDFGLDLQPCIELIERPNNPPGVLALLDEECWFPKATDKSFVEKLCTEQGSHPKFQKPKQLKDKTEFSIIHYAGKVDYNASAWLTKNMDPLNDNVTSLLNASSDKFVADLWKDVDRIVGLDQMAKMTESSLPSASKTKKGMFRTVGQLYKEQLGKLMTTLRNTTPNFVRCIIPNHEKRSGKLDAFLVLEQLRCNGVLEGIRICRQGFPNRIVFQEFRQRYEILAANAIPKGFMDGKQACILMIKALELDPNLYRIGQSKIFFRTGVLAHLEEERDLKITDVIMAFQAMCRGYLARKAFAKRQQQLTAMKVIQRNCAAYLKLRNWQWWRLFTKVKPLLQVTRQEEEMQAKEDELQKTKERQQKAENELKELEQKHSQLTEEKNLLQEQLQAETELYAEAEEMRVRLAAKKQELEEILHEMEARLEEEEDRGQQLQAERKKMAQQMLDLEEQLEEEEAARQKLQLEKVTAEAKIKKLEDEILVMDDQNNKLSKERKLLEERISDLTTNLAEEEEKAKNLTKLKNKHESMISELEVRLKKEEKSRQELEKLKRKLEGDASDFHEQIADLQAQIAELKMQLAKKEEELQAALARLDDEIAQKNNALKKIRELEGHISDLQEDLDSERAARNKAEKQKRDLGEELEALKTELEDTLDSTATQQELRAKREQEVTVLKKALDEETRSHEAQVQEMRQKHAQAVEELTEQLEQFKRAKANLDKNKQTLEKENADLAGELRVLGQAKQEVEHKKKKLEAQVQELQSKCSDGERARAELNDKVHKLQNEVESVTGMLNEAEGKAIKLAKDVASLSSQLQDTQELLQEETRQKLNVSTKLRQLEEERNSLQDQLDEEMEAKQNLERHISTLNIQLSDSKKKLQDFASTVEALEEGKKRFQKEIENLTQQYEEKAAAYDKLEKTKNRLQQELDDLVVDLDNQRQLVSNLEKKQRKFDQLLAEEKNISSKYADERDRAEAEAREKETKALSLARALEEALEAKEELERTNKMLKAEMEDLVSSKDDVGKNVHELEKSKRALETQMEEMKTQLEELEDELQATEDAKLRLEVNMQALKGQFERDLQARDEQNEEKRRQLQRQLHEYETELEDERKQRALAAAAKKKLEGDLKDLELQADSAIKGREEAIKQLRKLQAQMKDFQRELEDARASRDEIFATAKENEKKAKSLEADLMQLQEDLAAAERARKQADLEKEELAEELASSLSGRNALQDEKRRLEARIAQLEEELEEEQGNMEAMSDRVRKATQQAEQLSNELATERSTAQKNESARQQLERQNKELRSKLHEMEGAVKSKFKSTIAALEAKIAQLEEQVEQEAREKQAATKSLKQKDKKLKEILLQVEDERKMAEQYKEQAEKGNARVKQLKRQLEEAEEESQRINANRRKLQRELDEATESNEAMGREVNALKSKLRRGNETSFVPSRRSGGRRVIENADGSEEETDTRDADFNGTKASE</sequence>
<evidence type="ECO:0000250" key="1"/>
<evidence type="ECO:0000250" key="2">
    <source>
        <dbReference type="UniProtKB" id="O08638"/>
    </source>
</evidence>
<evidence type="ECO:0000250" key="3">
    <source>
        <dbReference type="UniProtKB" id="Q63862"/>
    </source>
</evidence>
<evidence type="ECO:0000250" key="4">
    <source>
        <dbReference type="UniProtKB" id="Q7Z406"/>
    </source>
</evidence>
<evidence type="ECO:0000255" key="5"/>
<evidence type="ECO:0000255" key="6">
    <source>
        <dbReference type="PROSITE-ProRule" id="PRU00116"/>
    </source>
</evidence>
<evidence type="ECO:0000255" key="7">
    <source>
        <dbReference type="PROSITE-ProRule" id="PRU00782"/>
    </source>
</evidence>
<evidence type="ECO:0000255" key="8">
    <source>
        <dbReference type="PROSITE-ProRule" id="PRU01190"/>
    </source>
</evidence>
<evidence type="ECO:0000256" key="9">
    <source>
        <dbReference type="SAM" id="MobiDB-lite"/>
    </source>
</evidence>
<evidence type="ECO:0000269" key="10">
    <source>
    </source>
</evidence>
<evidence type="ECO:0000269" key="11">
    <source>
    </source>
</evidence>
<evidence type="ECO:0000269" key="12">
    <source>
    </source>
</evidence>
<evidence type="ECO:0000269" key="13">
    <source>
    </source>
</evidence>
<evidence type="ECO:0000269" key="14">
    <source>
    </source>
</evidence>
<evidence type="ECO:0000269" key="15">
    <source>
    </source>
</evidence>
<evidence type="ECO:0000269" key="16">
    <source>
    </source>
</evidence>
<evidence type="ECO:0000269" key="17">
    <source>
    </source>
</evidence>
<evidence type="ECO:0000269" key="18">
    <source>
    </source>
</evidence>
<evidence type="ECO:0000303" key="19">
    <source>
    </source>
</evidence>
<evidence type="ECO:0000303" key="20">
    <source>
    </source>
</evidence>
<evidence type="ECO:0000305" key="21"/>
<evidence type="ECO:0007744" key="22">
    <source>
    </source>
</evidence>
<evidence type="ECO:0007744" key="23">
    <source>
    </source>
</evidence>
<accession>P35749</accession>
<accession>D2JYH7</accession>
<accession>O00396</accession>
<accession>O94944</accession>
<accession>P78422</accession>
<accession>Q3MIV8</accession>
<accession>Q3MNF0</accession>
<accession>Q3MNF1</accession>
<name>MYH11_HUMAN</name>
<reference key="1">
    <citation type="journal article" date="2005" name="Am. J. Physiol.">
        <title>(+)Insert smooth muscle myosin heavy chain (SM-B) isoform expression in human tissues.</title>
        <authorList>
            <person name="Leguillette R."/>
            <person name="Gil F.R."/>
            <person name="Zitouni N."/>
            <person name="Lajoie-Kadoch S."/>
            <person name="Sobieszek A."/>
            <person name="Lauzon A.M."/>
        </authorList>
    </citation>
    <scope>NUCLEOTIDE SEQUENCE [MRNA] (ISOFORMS 2 AND 3)</scope>
    <scope>TISSUE SPECIFICITY</scope>
</reference>
<reference key="2">
    <citation type="journal article" date="1999" name="Genomics">
        <title>Genome duplications and other features in 12 Mb of DNA sequence from human chromosome 16p and 16q.</title>
        <authorList>
            <person name="Loftus B.J."/>
            <person name="Kim U.-J."/>
            <person name="Sneddon V.P."/>
            <person name="Kalush F."/>
            <person name="Brandon R."/>
            <person name="Fuhrmann J."/>
            <person name="Mason T."/>
            <person name="Crosby M.L."/>
            <person name="Barnstead M."/>
            <person name="Cronin L."/>
            <person name="Mays A.D."/>
            <person name="Cao Y."/>
            <person name="Xu R.X."/>
            <person name="Kang H.-L."/>
            <person name="Mitchell S."/>
            <person name="Eichler E.E."/>
            <person name="Harris P.C."/>
            <person name="Venter J.C."/>
            <person name="Adams M.D."/>
        </authorList>
    </citation>
    <scope>NUCLEOTIDE SEQUENCE [LARGE SCALE GENOMIC DNA]</scope>
</reference>
<reference key="3">
    <citation type="journal article" date="1998" name="DNA Res.">
        <title>Prediction of the coding sequences of unidentified human genes. XII. The complete sequences of 100 new cDNA clones from brain which code for large proteins in vitro.</title>
        <authorList>
            <person name="Nagase T."/>
            <person name="Ishikawa K."/>
            <person name="Suyama M."/>
            <person name="Kikuno R."/>
            <person name="Hirosawa M."/>
            <person name="Miyajima N."/>
            <person name="Tanaka A."/>
            <person name="Kotani H."/>
            <person name="Nomura N."/>
            <person name="Ohara O."/>
        </authorList>
    </citation>
    <scope>NUCLEOTIDE SEQUENCE [LARGE SCALE MRNA] (ISOFORM 1)</scope>
    <source>
        <tissue>Brain</tissue>
    </source>
</reference>
<reference key="4">
    <citation type="submission" date="2003-01" db="EMBL/GenBank/DDBJ databases">
        <authorList>
            <person name="Nagase T."/>
            <person name="Kikuno R."/>
            <person name="Yamakawa H."/>
            <person name="Ohara O."/>
        </authorList>
    </citation>
    <scope>SEQUENCE REVISION</scope>
</reference>
<reference key="5">
    <citation type="submission" date="2009-09" db="EMBL/GenBank/DDBJ databases">
        <authorList>
            <consortium name="NHLBI resequencing and genotyping service (RS&amp;G)"/>
        </authorList>
    </citation>
    <scope>NUCLEOTIDE SEQUENCE [GENOMIC DNA]</scope>
</reference>
<reference key="6">
    <citation type="journal article" date="2004" name="Nature">
        <title>The sequence and analysis of duplication-rich human chromosome 16.</title>
        <authorList>
            <person name="Martin J."/>
            <person name="Han C."/>
            <person name="Gordon L.A."/>
            <person name="Terry A."/>
            <person name="Prabhakar S."/>
            <person name="She X."/>
            <person name="Xie G."/>
            <person name="Hellsten U."/>
            <person name="Chan Y.M."/>
            <person name="Altherr M."/>
            <person name="Couronne O."/>
            <person name="Aerts A."/>
            <person name="Bajorek E."/>
            <person name="Black S."/>
            <person name="Blumer H."/>
            <person name="Branscomb E."/>
            <person name="Brown N.C."/>
            <person name="Bruno W.J."/>
            <person name="Buckingham J.M."/>
            <person name="Callen D.F."/>
            <person name="Campbell C.S."/>
            <person name="Campbell M.L."/>
            <person name="Campbell E.W."/>
            <person name="Caoile C."/>
            <person name="Challacombe J.F."/>
            <person name="Chasteen L.A."/>
            <person name="Chertkov O."/>
            <person name="Chi H.C."/>
            <person name="Christensen M."/>
            <person name="Clark L.M."/>
            <person name="Cohn J.D."/>
            <person name="Denys M."/>
            <person name="Detter J.C."/>
            <person name="Dickson M."/>
            <person name="Dimitrijevic-Bussod M."/>
            <person name="Escobar J."/>
            <person name="Fawcett J.J."/>
            <person name="Flowers D."/>
            <person name="Fotopulos D."/>
            <person name="Glavina T."/>
            <person name="Gomez M."/>
            <person name="Gonzales E."/>
            <person name="Goodstein D."/>
            <person name="Goodwin L.A."/>
            <person name="Grady D.L."/>
            <person name="Grigoriev I."/>
            <person name="Groza M."/>
            <person name="Hammon N."/>
            <person name="Hawkins T."/>
            <person name="Haydu L."/>
            <person name="Hildebrand C.E."/>
            <person name="Huang W."/>
            <person name="Israni S."/>
            <person name="Jett J."/>
            <person name="Jewett P.B."/>
            <person name="Kadner K."/>
            <person name="Kimball H."/>
            <person name="Kobayashi A."/>
            <person name="Krawczyk M.-C."/>
            <person name="Leyba T."/>
            <person name="Longmire J.L."/>
            <person name="Lopez F."/>
            <person name="Lou Y."/>
            <person name="Lowry S."/>
            <person name="Ludeman T."/>
            <person name="Manohar C.F."/>
            <person name="Mark G.A."/>
            <person name="McMurray K.L."/>
            <person name="Meincke L.J."/>
            <person name="Morgan J."/>
            <person name="Moyzis R.K."/>
            <person name="Mundt M.O."/>
            <person name="Munk A.C."/>
            <person name="Nandkeshwar R.D."/>
            <person name="Pitluck S."/>
            <person name="Pollard M."/>
            <person name="Predki P."/>
            <person name="Parson-Quintana B."/>
            <person name="Ramirez L."/>
            <person name="Rash S."/>
            <person name="Retterer J."/>
            <person name="Ricke D.O."/>
            <person name="Robinson D.L."/>
            <person name="Rodriguez A."/>
            <person name="Salamov A."/>
            <person name="Saunders E.H."/>
            <person name="Scott D."/>
            <person name="Shough T."/>
            <person name="Stallings R.L."/>
            <person name="Stalvey M."/>
            <person name="Sutherland R.D."/>
            <person name="Tapia R."/>
            <person name="Tesmer J.G."/>
            <person name="Thayer N."/>
            <person name="Thompson L.S."/>
            <person name="Tice H."/>
            <person name="Torney D.C."/>
            <person name="Tran-Gyamfi M."/>
            <person name="Tsai M."/>
            <person name="Ulanovsky L.E."/>
            <person name="Ustaszewska A."/>
            <person name="Vo N."/>
            <person name="White P.S."/>
            <person name="Williams A.L."/>
            <person name="Wills P.L."/>
            <person name="Wu J.-R."/>
            <person name="Wu K."/>
            <person name="Yang J."/>
            <person name="DeJong P."/>
            <person name="Bruce D."/>
            <person name="Doggett N.A."/>
            <person name="Deaven L."/>
            <person name="Schmutz J."/>
            <person name="Grimwood J."/>
            <person name="Richardson P."/>
            <person name="Rokhsar D.S."/>
            <person name="Eichler E.E."/>
            <person name="Gilna P."/>
            <person name="Lucas S.M."/>
            <person name="Myers R.M."/>
            <person name="Rubin E.M."/>
            <person name="Pennacchio L.A."/>
        </authorList>
    </citation>
    <scope>NUCLEOTIDE SEQUENCE [LARGE SCALE GENOMIC DNA]</scope>
</reference>
<reference key="7">
    <citation type="submission" date="2005-07" db="EMBL/GenBank/DDBJ databases">
        <authorList>
            <person name="Mural R.J."/>
            <person name="Istrail S."/>
            <person name="Sutton G."/>
            <person name="Florea L."/>
            <person name="Halpern A.L."/>
            <person name="Mobarry C.M."/>
            <person name="Lippert R."/>
            <person name="Walenz B."/>
            <person name="Shatkay H."/>
            <person name="Dew I."/>
            <person name="Miller J.R."/>
            <person name="Flanigan M.J."/>
            <person name="Edwards N.J."/>
            <person name="Bolanos R."/>
            <person name="Fasulo D."/>
            <person name="Halldorsson B.V."/>
            <person name="Hannenhalli S."/>
            <person name="Turner R."/>
            <person name="Yooseph S."/>
            <person name="Lu F."/>
            <person name="Nusskern D.R."/>
            <person name="Shue B.C."/>
            <person name="Zheng X.H."/>
            <person name="Zhong F."/>
            <person name="Delcher A.L."/>
            <person name="Huson D.H."/>
            <person name="Kravitz S.A."/>
            <person name="Mouchard L."/>
            <person name="Reinert K."/>
            <person name="Remington K.A."/>
            <person name="Clark A.G."/>
            <person name="Waterman M.S."/>
            <person name="Eichler E.E."/>
            <person name="Adams M.D."/>
            <person name="Hunkapiller M.W."/>
            <person name="Myers E.W."/>
            <person name="Venter J.C."/>
        </authorList>
    </citation>
    <scope>NUCLEOTIDE SEQUENCE [LARGE SCALE GENOMIC DNA]</scope>
</reference>
<reference key="8">
    <citation type="journal article" date="2004" name="Genome Res.">
        <title>The status, quality, and expansion of the NIH full-length cDNA project: the Mammalian Gene Collection (MGC).</title>
        <authorList>
            <consortium name="The MGC Project Team"/>
        </authorList>
    </citation>
    <scope>NUCLEOTIDE SEQUENCE [LARGE SCALE MRNA] (ISOFORMS 3 AND 4)</scope>
    <source>
        <tissue>Colon</tissue>
    </source>
</reference>
<reference key="9">
    <citation type="journal article" date="1993" name="Am. J. Med. Genet.">
        <title>Human smooth muscle myosin heavy chain gene mapped to chromosomal region 16q12.</title>
        <authorList>
            <person name="Matsuoka R."/>
            <person name="Yoshida M.C."/>
            <person name="Furutani Y."/>
            <person name="Imamura S."/>
            <person name="Kanda N."/>
            <person name="Yanagisawa M."/>
            <person name="Masaki T."/>
            <person name="Takao A."/>
        </authorList>
    </citation>
    <scope>NUCLEOTIDE SEQUENCE [MRNA] OF 885-1972 (ISOFORM 1/2)</scope>
</reference>
<reference key="10">
    <citation type="submission" date="1992-11" db="EMBL/GenBank/DDBJ databases">
        <authorList>
            <person name="Okajima K."/>
        </authorList>
    </citation>
    <scope>NUCLEOTIDE SEQUENCE [MRNA] OF 1093-1972 (ISOFORM 1/2)</scope>
    <source>
        <tissue>Hippocampus</tissue>
    </source>
</reference>
<reference key="11">
    <citation type="journal article" date="2006" name="J. Proteome Res.">
        <title>Proteomic and bioinformatic characterization of the biogenesis and function of melanosomes.</title>
        <authorList>
            <person name="Chi A."/>
            <person name="Valencia J.C."/>
            <person name="Hu Z.-Z."/>
            <person name="Watabe H."/>
            <person name="Yamaguchi H."/>
            <person name="Mangini N.J."/>
            <person name="Huang H."/>
            <person name="Canfield V.A."/>
            <person name="Cheng K.C."/>
            <person name="Yang F."/>
            <person name="Abe R."/>
            <person name="Yamagishi S."/>
            <person name="Shabanowitz J."/>
            <person name="Hearing V.J."/>
            <person name="Wu C."/>
            <person name="Appella E."/>
            <person name="Hunt D.F."/>
        </authorList>
    </citation>
    <scope>SUBCELLULAR LOCATION [LARGE SCALE ANALYSIS]</scope>
    <source>
        <tissue>Melanoma</tissue>
    </source>
</reference>
<reference key="12">
    <citation type="journal article" date="2008" name="Proteomics">
        <title>Large-scale phosphoproteome analysis of human liver tissue by enrichment and fractionation of phosphopeptides with strong anion exchange chromatography.</title>
        <authorList>
            <person name="Han G."/>
            <person name="Ye M."/>
            <person name="Zhou H."/>
            <person name="Jiang X."/>
            <person name="Feng S."/>
            <person name="Jiang X."/>
            <person name="Tian R."/>
            <person name="Wan D."/>
            <person name="Zou H."/>
            <person name="Gu J."/>
        </authorList>
    </citation>
    <scope>PHOSPHORYLATION [LARGE SCALE ANALYSIS] AT SER-1954</scope>
    <scope>IDENTIFICATION BY MASS SPECTROMETRY [LARGE SCALE ANALYSIS]</scope>
    <source>
        <tissue>Liver</tissue>
    </source>
</reference>
<reference key="13">
    <citation type="journal article" date="2009" name="Anal. Chem.">
        <title>Lys-N and trypsin cover complementary parts of the phosphoproteome in a refined SCX-based approach.</title>
        <authorList>
            <person name="Gauci S."/>
            <person name="Helbig A.O."/>
            <person name="Slijper M."/>
            <person name="Krijgsveld J."/>
            <person name="Heck A.J."/>
            <person name="Mohammed S."/>
        </authorList>
    </citation>
    <scope>IDENTIFICATION BY MASS SPECTROMETRY [LARGE SCALE ANALYSIS]</scope>
</reference>
<reference key="14">
    <citation type="journal article" date="2014" name="J. Proteomics">
        <title>An enzyme assisted RP-RPLC approach for in-depth analysis of human liver phosphoproteome.</title>
        <authorList>
            <person name="Bian Y."/>
            <person name="Song C."/>
            <person name="Cheng K."/>
            <person name="Dong M."/>
            <person name="Wang F."/>
            <person name="Huang J."/>
            <person name="Sun D."/>
            <person name="Wang L."/>
            <person name="Ye M."/>
            <person name="Zou H."/>
        </authorList>
    </citation>
    <scope>PHOSPHORYLATION [LARGE SCALE ANALYSIS] AT SER-8; SER-23; SER-1954 AND THR-1958</scope>
    <scope>IDENTIFICATION BY MASS SPECTROMETRY [LARGE SCALE ANALYSIS]</scope>
    <source>
        <tissue>Liver</tissue>
    </source>
</reference>
<reference key="15">
    <citation type="journal article" date="2006" name="Nat. Genet.">
        <title>Mutations in myosin heavy chain 11 cause a syndrome associating thoracic aortic aneurysm/aortic dissection and patent ductus arteriosus.</title>
        <authorList>
            <person name="Zhu L."/>
            <person name="Vranckx R."/>
            <person name="Khau Van Kien P."/>
            <person name="Lalande A."/>
            <person name="Boisset N."/>
            <person name="Mathieu F."/>
            <person name="Wegman M."/>
            <person name="Glancy L."/>
            <person name="Gasc J.-M."/>
            <person name="Brunotte F."/>
            <person name="Bruneval P."/>
            <person name="Wolf J.-E."/>
            <person name="Michel J.-B."/>
            <person name="Jeunemaitre X."/>
        </authorList>
    </citation>
    <scope>VARIANTS AAT4 1241-ARG--LEU-1264 DEL AND GLN-1758</scope>
</reference>
<reference key="16">
    <citation type="journal article" date="2015" name="Eur. J. Hum. Genet.">
        <title>A homozygous loss-of-function variant in MYH11 in a case with megacystis-microcolon-intestinal hypoperistalsis syndrome.</title>
        <authorList>
            <person name="Gauthier J."/>
            <person name="Ouled Amar Bencheikh B."/>
            <person name="Hamdan F.F."/>
            <person name="Harrison S.M."/>
            <person name="Baker L.A."/>
            <person name="Couture F."/>
            <person name="Thiffault I."/>
            <person name="Ouazzani R."/>
            <person name="Samuels M.E."/>
            <person name="Mitchell G.A."/>
            <person name="Rouleau G.A."/>
            <person name="Michaud J.L."/>
            <person name="Soucy J.F."/>
        </authorList>
    </citation>
    <scope>VARIANT MMIHS2 1200-LYS--GLU-1972 DEL</scope>
    <scope>INVOLVEMENT IN MMIHS2</scope>
</reference>
<reference key="17">
    <citation type="journal article" date="2018" name="Am. J. Med. Genet. A">
        <title>Newly described recessive MYH11 disorder with clinical overlap of multisystemic smooth muscle dysfunction and megacystis microcolon hypoperistalsis syndromes.</title>
        <authorList>
            <person name="Yetman A.T."/>
            <person name="Starr L.J."/>
        </authorList>
    </citation>
    <scope>INVOLVEMENT IN MMIHS2</scope>
</reference>
<reference key="18">
    <citation type="journal article" date="2019" name="Clin. Genet.">
        <title>Identification of a dominant MYH11 causal variant in chronic intestinal pseudo-obstruction: Results of whole-exome sequencing.</title>
        <authorList>
            <person name="Dong W."/>
            <person name="Baldwin C."/>
            <person name="Choi J."/>
            <person name="Milunsky J.M."/>
            <person name="Zhang J."/>
            <person name="Bilguvar K."/>
            <person name="Lifton R.P."/>
            <person name="Milunsky A."/>
        </authorList>
    </citation>
    <scope>INVOLVEMENT IN VSCM2</scope>
</reference>
<reference key="19">
    <citation type="journal article" date="2018" name="Neurogastroenterol. Motil.">
        <title>Variants in ACTG2 underlie a substantial number of Australasian patients with primary chronic intestinal pseudo-obstruction.</title>
        <authorList>
            <person name="Ravenscroft G."/>
            <person name="Pannell S."/>
            <person name="O'Grady G."/>
            <person name="Ong R."/>
            <person name="Ee H.C."/>
            <person name="Faiz F."/>
            <person name="Marns L."/>
            <person name="Goel H."/>
            <person name="Kumarasinghe P."/>
            <person name="Sollis E."/>
            <person name="Sivadorai P."/>
            <person name="Wilson M."/>
            <person name="Magoffin A."/>
            <person name="Nightingale S."/>
            <person name="Freckmann M.L."/>
            <person name="Kirk E.P."/>
            <person name="Sachdev R."/>
            <person name="Lemberg D.A."/>
            <person name="Delatycki M.B."/>
            <person name="Kamm M.A."/>
            <person name="Basnayake C."/>
            <person name="Lamont P.J."/>
            <person name="Amor D.J."/>
            <person name="Jones K."/>
            <person name="Schilperoort J."/>
            <person name="Davis M.R."/>
            <person name="Laing N.G."/>
        </authorList>
    </citation>
    <scope>VARIANT GLY-616</scope>
</reference>
<reference key="20">
    <citation type="journal article" date="2019" name="J. Hum. Genet.">
        <title>Compound heterozygous variants in MYH11 underlie autosomal recessive megacystis-microcolon-intestinal hypoperistalsis syndrome in a Chinese family.</title>
        <authorList>
            <person name="Wang Q."/>
            <person name="Zhang J."/>
            <person name="Wang H."/>
            <person name="Feng Q."/>
            <person name="Luo F."/>
            <person name="Xie J."/>
        </authorList>
    </citation>
    <scope>VARIANT MMIHS2 HIS-677</scope>
    <scope>INVOLVEMENT IN MMIHS2</scope>
</reference>
<reference key="21">
    <citation type="journal article" date="2020" name="Hum. Mutat.">
        <title>Protein-elongating mutations in MYH11 are implicated in a dominantly inherited smooth muscle dysmotility syndrome with severe esophageal, gastric, and intestinal disease.</title>
        <authorList>
            <person name="Gilbert M.A."/>
            <person name="Schultz-Rogers L."/>
            <person name="Rajagopalan R."/>
            <person name="Grochowski C.M."/>
            <person name="Wilkins B.J."/>
            <person name="Biswas S."/>
            <person name="Conlin L.K."/>
            <person name="Fiorino K.N."/>
            <person name="Dhamija R."/>
            <person name="Pack M.A."/>
            <person name="Klee E.W."/>
            <person name="Piccoli D.A."/>
            <person name="Spinner N.B."/>
        </authorList>
    </citation>
    <scope>VARIANT VSCM2 VAL-1555</scope>
    <scope>INVOLVEMENT IN VSCM2</scope>
</reference>